<proteinExistence type="inferred from homology"/>
<accession>H9JDT2</accession>
<feature type="chain" id="PRO_0000439353" description="Small RNA 2'-O-methyltransferase">
    <location>
        <begin position="1"/>
        <end position="415"/>
    </location>
</feature>
<feature type="binding site" evidence="3">
    <location>
        <position position="99"/>
    </location>
    <ligand>
        <name>S-adenosyl-L-methionine</name>
        <dbReference type="ChEBI" id="CHEBI:59789"/>
    </ligand>
</feature>
<feature type="binding site" evidence="3">
    <location>
        <position position="117"/>
    </location>
    <ligand>
        <name>S-adenosyl-L-methionine</name>
        <dbReference type="ChEBI" id="CHEBI:59789"/>
    </ligand>
</feature>
<feature type="binding site" evidence="3">
    <location>
        <position position="169"/>
    </location>
    <ligand>
        <name>Mg(2+)</name>
        <dbReference type="ChEBI" id="CHEBI:18420"/>
    </ligand>
</feature>
<feature type="binding site" evidence="3">
    <location>
        <position position="172"/>
    </location>
    <ligand>
        <name>Mg(2+)</name>
        <dbReference type="ChEBI" id="CHEBI:18420"/>
    </ligand>
</feature>
<feature type="binding site" evidence="3">
    <location>
        <position position="173"/>
    </location>
    <ligand>
        <name>Mg(2+)</name>
        <dbReference type="ChEBI" id="CHEBI:18420"/>
    </ligand>
</feature>
<comment type="function">
    <text evidence="4">Methyltransferase that adds a 2'-O-methyl group at the 3'-end of piRNAs, a class of 24 to 30 nucleotide RNAs that are generated by a Dicer-independent mechanism and are primarily derived from transposons and other repeated sequence elements. This probably protects the 3'-end of piRNAs from uridylation activity and subsequent degradation. Stabilization of piRNAs is essential for gametogenesis.</text>
</comment>
<comment type="catalytic activity">
    <reaction evidence="2">
        <text>small RNA 3'-end nucleotide + S-adenosyl-L-methionine = small RNA 3'-end 2'-O-methylnucleotide + S-adenosyl-L-homocysteine + H(+)</text>
        <dbReference type="Rhea" id="RHEA:37887"/>
        <dbReference type="Rhea" id="RHEA-COMP:10415"/>
        <dbReference type="Rhea" id="RHEA-COMP:10416"/>
        <dbReference type="ChEBI" id="CHEBI:15378"/>
        <dbReference type="ChEBI" id="CHEBI:57856"/>
        <dbReference type="ChEBI" id="CHEBI:59789"/>
        <dbReference type="ChEBI" id="CHEBI:74896"/>
        <dbReference type="ChEBI" id="CHEBI:74898"/>
        <dbReference type="EC" id="2.1.1.386"/>
    </reaction>
</comment>
<comment type="cofactor">
    <cofactor evidence="3">
        <name>Mg(2+)</name>
        <dbReference type="ChEBI" id="CHEBI:18420"/>
    </cofactor>
    <text evidence="3">Binds 1 Mg(2+) ion per subunit.</text>
</comment>
<comment type="subcellular location">
    <subcellularLocation>
        <location evidence="1">Cytoplasm</location>
    </subcellularLocation>
    <text evidence="1">Component of the meiotic nuage, also named P granule, a germ-cell-specific organelle required to repress transposon activity during meiosis.</text>
</comment>
<comment type="similarity">
    <text evidence="6">Belongs to the methyltransferase superfamily. HEN1 family.</text>
</comment>
<protein>
    <recommendedName>
        <fullName>Small RNA 2'-O-methyltransferase</fullName>
        <ecNumber evidence="2">2.1.1.386</ecNumber>
    </recommendedName>
    <alternativeName>
        <fullName>HEN1 methyltransferase homolog 1</fullName>
        <shortName evidence="5">BmHen1</shortName>
    </alternativeName>
</protein>
<sequence>MIIAIQTLIFFRQSLLTALDRLLRPYFQKFALSLTKSSFESDDDEPDENVFAEYDDEKGVIFFPPMYVQRYAAIVDCLLDERWSGKLDKVVDLGYHDMSFIKYLKEVSGIKSILGVDLETIPLQCSSDLLSCNEYAPKRETPLQISLLQGNAADPDYRLIGCDAVIAIEMIEHMLPHDLERLVHTVFAFIKPWIVIFTTPNDFKDVITGDINICKFNEKYLHRLNCTTLQVKKFSKTTQGLMAKNKVDALVHTREVVEEIKHLTKMLNFNKSGLNQQDEKTHIWYNFNWGENAPYWNQYYKIVREYNYPFETKSDDCRILDLISDEMNRLIDLQYDDILSVDLNKLEIPLQHLMQTVQHITDDVENVRELLEWNGYEVVDDMVIYSRLAIDNVTIDSQIDDWQENESVSDVKKFN</sequence>
<evidence type="ECO:0000250" key="1">
    <source>
        <dbReference type="UniProtKB" id="Q568P9"/>
    </source>
</evidence>
<evidence type="ECO:0000250" key="2">
    <source>
        <dbReference type="UniProtKB" id="Q8CAE2"/>
    </source>
</evidence>
<evidence type="ECO:0000250" key="3">
    <source>
        <dbReference type="UniProtKB" id="Q9C5Q8"/>
    </source>
</evidence>
<evidence type="ECO:0000269" key="4">
    <source>
    </source>
</evidence>
<evidence type="ECO:0000303" key="5">
    <source>
    </source>
</evidence>
<evidence type="ECO:0000305" key="6"/>
<reference key="1">
    <citation type="journal article" date="2008" name="Insect Biochem. Mol. Biol.">
        <title>The genome of a lepidopteran model insect, the silkworm Bombyx mori.</title>
        <authorList>
            <consortium name="International Silkworm Genome Consortium"/>
        </authorList>
    </citation>
    <scope>NUCLEOTIDE SEQUENCE [LARGE SCALE GENOMIC DNA]</scope>
    <source>
        <strain>p50T</strain>
    </source>
</reference>
<reference key="2">
    <citation type="journal article" date="2016" name="Cell">
        <title>Identification and functional analysis of the pre-piRNA 3' trimmer in silkworms.</title>
        <authorList>
            <person name="Izumi N."/>
            <person name="Shoji K."/>
            <person name="Sakaguchi Y."/>
            <person name="Honda S."/>
            <person name="Kirino Y."/>
            <person name="Suzuki T."/>
            <person name="Katsuma S."/>
            <person name="Tomari Y."/>
        </authorList>
    </citation>
    <scope>FUNCTION</scope>
</reference>
<organism>
    <name type="scientific">Bombyx mori</name>
    <name type="common">Silk moth</name>
    <dbReference type="NCBI Taxonomy" id="7091"/>
    <lineage>
        <taxon>Eukaryota</taxon>
        <taxon>Metazoa</taxon>
        <taxon>Ecdysozoa</taxon>
        <taxon>Arthropoda</taxon>
        <taxon>Hexapoda</taxon>
        <taxon>Insecta</taxon>
        <taxon>Pterygota</taxon>
        <taxon>Neoptera</taxon>
        <taxon>Endopterygota</taxon>
        <taxon>Lepidoptera</taxon>
        <taxon>Glossata</taxon>
        <taxon>Ditrysia</taxon>
        <taxon>Bombycoidea</taxon>
        <taxon>Bombycidae</taxon>
        <taxon>Bombycinae</taxon>
        <taxon>Bombyx</taxon>
    </lineage>
</organism>
<keyword id="KW-0963">Cytoplasm</keyword>
<keyword id="KW-0460">Magnesium</keyword>
<keyword id="KW-0479">Metal-binding</keyword>
<keyword id="KW-0489">Methyltransferase</keyword>
<keyword id="KW-1185">Reference proteome</keyword>
<keyword id="KW-0694">RNA-binding</keyword>
<keyword id="KW-0943">RNA-mediated gene silencing</keyword>
<keyword id="KW-0949">S-adenosyl-L-methionine</keyword>
<keyword id="KW-0808">Transferase</keyword>
<dbReference type="EC" id="2.1.1.386" evidence="2"/>
<dbReference type="EMBL" id="BABH01003003">
    <property type="status" value="NOT_ANNOTATED_CDS"/>
    <property type="molecule type" value="Genomic_DNA"/>
</dbReference>
<dbReference type="EMBL" id="BABH01003004">
    <property type="status" value="NOT_ANNOTATED_CDS"/>
    <property type="molecule type" value="Genomic_DNA"/>
</dbReference>
<dbReference type="RefSeq" id="XP_004928786.2">
    <property type="nucleotide sequence ID" value="XM_004928729.2"/>
</dbReference>
<dbReference type="SMR" id="H9JDT2"/>
<dbReference type="FunCoup" id="H9JDT2">
    <property type="interactions" value="555"/>
</dbReference>
<dbReference type="STRING" id="7091.H9JDT2"/>
<dbReference type="PaxDb" id="7091-BGIBMGA007679-TA"/>
<dbReference type="eggNOG" id="KOG1045">
    <property type="taxonomic scope" value="Eukaryota"/>
</dbReference>
<dbReference type="HOGENOM" id="CLU_044646_1_0_1"/>
<dbReference type="InParanoid" id="H9JDT2"/>
<dbReference type="OMA" id="GYHDMSF"/>
<dbReference type="Proteomes" id="UP000005204">
    <property type="component" value="Unassembled WGS sequence"/>
</dbReference>
<dbReference type="GO" id="GO:0005737">
    <property type="term" value="C:cytoplasm"/>
    <property type="evidence" value="ECO:0007669"/>
    <property type="project" value="UniProtKB-SubCell"/>
</dbReference>
<dbReference type="GO" id="GO:0005634">
    <property type="term" value="C:nucleus"/>
    <property type="evidence" value="ECO:0007669"/>
    <property type="project" value="TreeGrafter"/>
</dbReference>
<dbReference type="GO" id="GO:0046872">
    <property type="term" value="F:metal ion binding"/>
    <property type="evidence" value="ECO:0007669"/>
    <property type="project" value="UniProtKB-KW"/>
</dbReference>
<dbReference type="GO" id="GO:0003723">
    <property type="term" value="F:RNA binding"/>
    <property type="evidence" value="ECO:0007669"/>
    <property type="project" value="UniProtKB-KW"/>
</dbReference>
<dbReference type="GO" id="GO:0090486">
    <property type="term" value="F:small RNA 2'-O-methyltransferase activity"/>
    <property type="evidence" value="ECO:0007669"/>
    <property type="project" value="RHEA"/>
</dbReference>
<dbReference type="GO" id="GO:0034587">
    <property type="term" value="P:piRNA processing"/>
    <property type="evidence" value="ECO:0000315"/>
    <property type="project" value="UniProtKB"/>
</dbReference>
<dbReference type="GO" id="GO:0001510">
    <property type="term" value="P:RNA methylation"/>
    <property type="evidence" value="ECO:0000315"/>
    <property type="project" value="UniProtKB"/>
</dbReference>
<dbReference type="GO" id="GO:0030422">
    <property type="term" value="P:siRNA processing"/>
    <property type="evidence" value="ECO:0007669"/>
    <property type="project" value="TreeGrafter"/>
</dbReference>
<dbReference type="Gene3D" id="3.40.50.150">
    <property type="entry name" value="Vaccinia Virus protein VP39"/>
    <property type="match status" value="1"/>
</dbReference>
<dbReference type="InterPro" id="IPR026610">
    <property type="entry name" value="Hen1"/>
</dbReference>
<dbReference type="InterPro" id="IPR029063">
    <property type="entry name" value="SAM-dependent_MTases_sf"/>
</dbReference>
<dbReference type="PANTHER" id="PTHR21404">
    <property type="entry name" value="HEN1"/>
    <property type="match status" value="1"/>
</dbReference>
<dbReference type="PANTHER" id="PTHR21404:SF3">
    <property type="entry name" value="SMALL RNA 2'-O-METHYLTRANSFERASE"/>
    <property type="match status" value="1"/>
</dbReference>
<dbReference type="SUPFAM" id="SSF53335">
    <property type="entry name" value="S-adenosyl-L-methionine-dependent methyltransferases"/>
    <property type="match status" value="1"/>
</dbReference>
<name>HENMT_BOMMO</name>